<accession>Q1J9Z2</accession>
<protein>
    <recommendedName>
        <fullName evidence="1">tRNA N6-adenosine threonylcarbamoyltransferase</fullName>
        <ecNumber evidence="1">2.3.1.234</ecNumber>
    </recommendedName>
    <alternativeName>
        <fullName evidence="1">N6-L-threonylcarbamoyladenine synthase</fullName>
        <shortName evidence="1">t(6)A synthase</shortName>
    </alternativeName>
    <alternativeName>
        <fullName evidence="1">t(6)A37 threonylcarbamoyladenosine biosynthesis protein TsaD</fullName>
    </alternativeName>
    <alternativeName>
        <fullName evidence="1">tRNA threonylcarbamoyladenosine biosynthesis protein TsaD</fullName>
    </alternativeName>
</protein>
<evidence type="ECO:0000255" key="1">
    <source>
        <dbReference type="HAMAP-Rule" id="MF_01445"/>
    </source>
</evidence>
<evidence type="ECO:0000305" key="2"/>
<dbReference type="EC" id="2.3.1.234" evidence="1"/>
<dbReference type="EMBL" id="CP000261">
    <property type="protein sequence ID" value="ABF36669.1"/>
    <property type="status" value="ALT_FRAME"/>
    <property type="molecule type" value="Genomic_DNA"/>
</dbReference>
<dbReference type="SMR" id="Q1J9Z2"/>
<dbReference type="KEGG" id="spj:MGAS2096_Spy1617"/>
<dbReference type="HOGENOM" id="CLU_023208_0_1_9"/>
<dbReference type="GO" id="GO:0005737">
    <property type="term" value="C:cytoplasm"/>
    <property type="evidence" value="ECO:0007669"/>
    <property type="project" value="UniProtKB-SubCell"/>
</dbReference>
<dbReference type="GO" id="GO:0005506">
    <property type="term" value="F:iron ion binding"/>
    <property type="evidence" value="ECO:0007669"/>
    <property type="project" value="UniProtKB-UniRule"/>
</dbReference>
<dbReference type="GO" id="GO:0061711">
    <property type="term" value="F:N(6)-L-threonylcarbamoyladenine synthase activity"/>
    <property type="evidence" value="ECO:0007669"/>
    <property type="project" value="UniProtKB-EC"/>
</dbReference>
<dbReference type="GO" id="GO:0002949">
    <property type="term" value="P:tRNA threonylcarbamoyladenosine modification"/>
    <property type="evidence" value="ECO:0007669"/>
    <property type="project" value="UniProtKB-UniRule"/>
</dbReference>
<dbReference type="CDD" id="cd24133">
    <property type="entry name" value="ASKHA_NBD_TsaD_bac"/>
    <property type="match status" value="1"/>
</dbReference>
<dbReference type="FunFam" id="3.30.420.40:FF:000012">
    <property type="entry name" value="tRNA N6-adenosine threonylcarbamoyltransferase"/>
    <property type="match status" value="1"/>
</dbReference>
<dbReference type="FunFam" id="3.30.420.40:FF:000040">
    <property type="entry name" value="tRNA N6-adenosine threonylcarbamoyltransferase"/>
    <property type="match status" value="1"/>
</dbReference>
<dbReference type="Gene3D" id="3.30.420.40">
    <property type="match status" value="2"/>
</dbReference>
<dbReference type="HAMAP" id="MF_01445">
    <property type="entry name" value="TsaD"/>
    <property type="match status" value="1"/>
</dbReference>
<dbReference type="InterPro" id="IPR043129">
    <property type="entry name" value="ATPase_NBD"/>
</dbReference>
<dbReference type="InterPro" id="IPR000905">
    <property type="entry name" value="Gcp-like_dom"/>
</dbReference>
<dbReference type="InterPro" id="IPR017861">
    <property type="entry name" value="KAE1/TsaD"/>
</dbReference>
<dbReference type="InterPro" id="IPR022450">
    <property type="entry name" value="TsaD"/>
</dbReference>
<dbReference type="NCBIfam" id="TIGR00329">
    <property type="entry name" value="gcp_kae1"/>
    <property type="match status" value="1"/>
</dbReference>
<dbReference type="NCBIfam" id="TIGR03723">
    <property type="entry name" value="T6A_TsaD_YgjD"/>
    <property type="match status" value="1"/>
</dbReference>
<dbReference type="PANTHER" id="PTHR11735">
    <property type="entry name" value="TRNA N6-ADENOSINE THREONYLCARBAMOYLTRANSFERASE"/>
    <property type="match status" value="1"/>
</dbReference>
<dbReference type="PANTHER" id="PTHR11735:SF6">
    <property type="entry name" value="TRNA N6-ADENOSINE THREONYLCARBAMOYLTRANSFERASE, MITOCHONDRIAL"/>
    <property type="match status" value="1"/>
</dbReference>
<dbReference type="Pfam" id="PF00814">
    <property type="entry name" value="TsaD"/>
    <property type="match status" value="1"/>
</dbReference>
<dbReference type="PRINTS" id="PR00789">
    <property type="entry name" value="OSIALOPTASE"/>
</dbReference>
<dbReference type="SUPFAM" id="SSF53067">
    <property type="entry name" value="Actin-like ATPase domain"/>
    <property type="match status" value="1"/>
</dbReference>
<gene>
    <name evidence="1" type="primary">tsaD</name>
    <name type="synonym">gcp</name>
    <name type="ordered locus">MGAS2096_Spy1617</name>
</gene>
<proteinExistence type="inferred from homology"/>
<feature type="chain" id="PRO_0000303565" description="tRNA N6-adenosine threonylcarbamoyltransferase">
    <location>
        <begin position="1"/>
        <end position="342"/>
    </location>
</feature>
<feature type="binding site" evidence="1">
    <location>
        <position position="114"/>
    </location>
    <ligand>
        <name>Fe cation</name>
        <dbReference type="ChEBI" id="CHEBI:24875"/>
    </ligand>
</feature>
<feature type="binding site" evidence="1">
    <location>
        <position position="118"/>
    </location>
    <ligand>
        <name>Fe cation</name>
        <dbReference type="ChEBI" id="CHEBI:24875"/>
    </ligand>
</feature>
<feature type="binding site" evidence="1">
    <location>
        <begin position="136"/>
        <end position="140"/>
    </location>
    <ligand>
        <name>substrate</name>
    </ligand>
</feature>
<feature type="binding site" evidence="1">
    <location>
        <position position="169"/>
    </location>
    <ligand>
        <name>substrate</name>
    </ligand>
</feature>
<feature type="binding site" evidence="1">
    <location>
        <position position="182"/>
    </location>
    <ligand>
        <name>substrate</name>
    </ligand>
</feature>
<feature type="binding site" evidence="1">
    <location>
        <position position="186"/>
    </location>
    <ligand>
        <name>substrate</name>
    </ligand>
</feature>
<feature type="binding site" evidence="1">
    <location>
        <position position="275"/>
    </location>
    <ligand>
        <name>substrate</name>
    </ligand>
</feature>
<feature type="binding site" evidence="1">
    <location>
        <position position="301"/>
    </location>
    <ligand>
        <name>Fe cation</name>
        <dbReference type="ChEBI" id="CHEBI:24875"/>
    </ligand>
</feature>
<name>TSAD_STRPB</name>
<sequence>MTDRYILAVESSCDETSVAILKNESTLLSNVIASQVESHKRFGGVVPEVASRHHVEVITTCFEDALQEAGISASDLSAVAVTYGPGLVGALLVGLAAAKAFAWANHLPLIPVNHMAGHLMAAREQKPLVYPLIALLVSGGHTELVYVPEPGDYHIIGETRDDAVGEAYDKVGRVMGLTYPAGREIDQLAHKGQDTYHFPRAMITEDHLEFSFSGLKSAFINLHHNAKQKGDELILEDLCASFQAAVLDILLAKTKKALSRYPAKMLVVAGGVAANQGLRDRLAQEITHIEVVIPKLRLCGDNAGMIALAAAIEYDKQHFANMSLNAKPSLAFDQFPDSFVIN</sequence>
<keyword id="KW-0012">Acyltransferase</keyword>
<keyword id="KW-0963">Cytoplasm</keyword>
<keyword id="KW-0408">Iron</keyword>
<keyword id="KW-0479">Metal-binding</keyword>
<keyword id="KW-0808">Transferase</keyword>
<keyword id="KW-0819">tRNA processing</keyword>
<comment type="function">
    <text evidence="1">Required for the formation of a threonylcarbamoyl group on adenosine at position 37 (t(6)A37) in tRNAs that read codons beginning with adenine. Is involved in the transfer of the threonylcarbamoyl moiety of threonylcarbamoyl-AMP (TC-AMP) to the N6 group of A37, together with TsaE and TsaB. TsaD likely plays a direct catalytic role in this reaction.</text>
</comment>
<comment type="catalytic activity">
    <reaction evidence="1">
        <text>L-threonylcarbamoyladenylate + adenosine(37) in tRNA = N(6)-L-threonylcarbamoyladenosine(37) in tRNA + AMP + H(+)</text>
        <dbReference type="Rhea" id="RHEA:37059"/>
        <dbReference type="Rhea" id="RHEA-COMP:10162"/>
        <dbReference type="Rhea" id="RHEA-COMP:10163"/>
        <dbReference type="ChEBI" id="CHEBI:15378"/>
        <dbReference type="ChEBI" id="CHEBI:73682"/>
        <dbReference type="ChEBI" id="CHEBI:74411"/>
        <dbReference type="ChEBI" id="CHEBI:74418"/>
        <dbReference type="ChEBI" id="CHEBI:456215"/>
        <dbReference type="EC" id="2.3.1.234"/>
    </reaction>
</comment>
<comment type="cofactor">
    <cofactor evidence="1">
        <name>Fe(2+)</name>
        <dbReference type="ChEBI" id="CHEBI:29033"/>
    </cofactor>
    <text evidence="1">Binds 1 Fe(2+) ion per subunit.</text>
</comment>
<comment type="subcellular location">
    <subcellularLocation>
        <location evidence="1">Cytoplasm</location>
    </subcellularLocation>
</comment>
<comment type="similarity">
    <text evidence="1">Belongs to the KAE1 / TsaD family.</text>
</comment>
<comment type="sequence caution" evidence="2">
    <conflict type="frameshift">
        <sequence resource="EMBL-CDS" id="ABF36669"/>
    </conflict>
</comment>
<reference key="1">
    <citation type="journal article" date="2006" name="Proc. Natl. Acad. Sci. U.S.A.">
        <title>Molecular genetic anatomy of inter- and intraserotype variation in the human bacterial pathogen group A Streptococcus.</title>
        <authorList>
            <person name="Beres S.B."/>
            <person name="Richter E.W."/>
            <person name="Nagiec M.J."/>
            <person name="Sumby P."/>
            <person name="Porcella S.F."/>
            <person name="DeLeo F.R."/>
            <person name="Musser J.M."/>
        </authorList>
    </citation>
    <scope>NUCLEOTIDE SEQUENCE [LARGE SCALE GENOMIC DNA]</scope>
    <source>
        <strain>MGAS2096</strain>
    </source>
</reference>
<organism>
    <name type="scientific">Streptococcus pyogenes serotype M12 (strain MGAS2096)</name>
    <dbReference type="NCBI Taxonomy" id="370553"/>
    <lineage>
        <taxon>Bacteria</taxon>
        <taxon>Bacillati</taxon>
        <taxon>Bacillota</taxon>
        <taxon>Bacilli</taxon>
        <taxon>Lactobacillales</taxon>
        <taxon>Streptococcaceae</taxon>
        <taxon>Streptococcus</taxon>
    </lineage>
</organism>